<name>Y2128_CUPMC</name>
<proteinExistence type="inferred from homology"/>
<feature type="chain" id="PRO_1000003806" description="Nucleoid-associated protein Rmet_2128">
    <location>
        <begin position="1"/>
        <end position="108"/>
    </location>
</feature>
<feature type="region of interest" description="Disordered" evidence="2">
    <location>
        <begin position="86"/>
        <end position="108"/>
    </location>
</feature>
<feature type="compositionally biased region" description="Polar residues" evidence="2">
    <location>
        <begin position="86"/>
        <end position="96"/>
    </location>
</feature>
<feature type="compositionally biased region" description="Pro residues" evidence="2">
    <location>
        <begin position="99"/>
        <end position="108"/>
    </location>
</feature>
<comment type="function">
    <text evidence="1">Binds to DNA and alters its conformation. May be involved in regulation of gene expression, nucleoid organization and DNA protection.</text>
</comment>
<comment type="subunit">
    <text evidence="1">Homodimer.</text>
</comment>
<comment type="subcellular location">
    <subcellularLocation>
        <location evidence="1">Cytoplasm</location>
        <location evidence="1">Nucleoid</location>
    </subcellularLocation>
</comment>
<comment type="similarity">
    <text evidence="1">Belongs to the YbaB/EbfC family.</text>
</comment>
<keyword id="KW-0963">Cytoplasm</keyword>
<keyword id="KW-0238">DNA-binding</keyword>
<keyword id="KW-1185">Reference proteome</keyword>
<gene>
    <name type="ordered locus">Rmet_2128</name>
</gene>
<evidence type="ECO:0000255" key="1">
    <source>
        <dbReference type="HAMAP-Rule" id="MF_00274"/>
    </source>
</evidence>
<evidence type="ECO:0000256" key="2">
    <source>
        <dbReference type="SAM" id="MobiDB-lite"/>
    </source>
</evidence>
<sequence>MMKGQLAGLMKQAQQMQENMKKMQEQLAQIEVEGQSGAGLVKVVMTCKNDVKRVTIDPSLLADDKDLLEDLVAAAFNDAVRKAEATTQEKMGSMTSGLPLPPGFKLPF</sequence>
<accession>Q1LLG9</accession>
<dbReference type="EMBL" id="CP000352">
    <property type="protein sequence ID" value="ABF09007.1"/>
    <property type="molecule type" value="Genomic_DNA"/>
</dbReference>
<dbReference type="RefSeq" id="WP_008647477.1">
    <property type="nucleotide sequence ID" value="NC_007973.1"/>
</dbReference>
<dbReference type="SMR" id="Q1LLG9"/>
<dbReference type="STRING" id="266264.Rmet_2128"/>
<dbReference type="KEGG" id="rme:Rmet_2128"/>
<dbReference type="eggNOG" id="COG0718">
    <property type="taxonomic scope" value="Bacteria"/>
</dbReference>
<dbReference type="HOGENOM" id="CLU_140930_0_0_4"/>
<dbReference type="Proteomes" id="UP000002429">
    <property type="component" value="Chromosome"/>
</dbReference>
<dbReference type="GO" id="GO:0043590">
    <property type="term" value="C:bacterial nucleoid"/>
    <property type="evidence" value="ECO:0007669"/>
    <property type="project" value="UniProtKB-UniRule"/>
</dbReference>
<dbReference type="GO" id="GO:0005829">
    <property type="term" value="C:cytosol"/>
    <property type="evidence" value="ECO:0007669"/>
    <property type="project" value="TreeGrafter"/>
</dbReference>
<dbReference type="GO" id="GO:0003677">
    <property type="term" value="F:DNA binding"/>
    <property type="evidence" value="ECO:0007669"/>
    <property type="project" value="UniProtKB-UniRule"/>
</dbReference>
<dbReference type="FunFam" id="3.30.1310.10:FF:000001">
    <property type="entry name" value="Nucleoid-associated protein YbaB"/>
    <property type="match status" value="1"/>
</dbReference>
<dbReference type="Gene3D" id="3.30.1310.10">
    <property type="entry name" value="Nucleoid-associated protein YbaB-like domain"/>
    <property type="match status" value="1"/>
</dbReference>
<dbReference type="HAMAP" id="MF_00274">
    <property type="entry name" value="DNA_YbaB_EbfC"/>
    <property type="match status" value="1"/>
</dbReference>
<dbReference type="InterPro" id="IPR036894">
    <property type="entry name" value="YbaB-like_sf"/>
</dbReference>
<dbReference type="InterPro" id="IPR004401">
    <property type="entry name" value="YbaB/EbfC"/>
</dbReference>
<dbReference type="NCBIfam" id="TIGR00103">
    <property type="entry name" value="DNA_YbaB_EbfC"/>
    <property type="match status" value="1"/>
</dbReference>
<dbReference type="PANTHER" id="PTHR33449">
    <property type="entry name" value="NUCLEOID-ASSOCIATED PROTEIN YBAB"/>
    <property type="match status" value="1"/>
</dbReference>
<dbReference type="PANTHER" id="PTHR33449:SF1">
    <property type="entry name" value="NUCLEOID-ASSOCIATED PROTEIN YBAB"/>
    <property type="match status" value="1"/>
</dbReference>
<dbReference type="Pfam" id="PF02575">
    <property type="entry name" value="YbaB_DNA_bd"/>
    <property type="match status" value="1"/>
</dbReference>
<dbReference type="PIRSF" id="PIRSF004555">
    <property type="entry name" value="UCP004555"/>
    <property type="match status" value="1"/>
</dbReference>
<dbReference type="SUPFAM" id="SSF82607">
    <property type="entry name" value="YbaB-like"/>
    <property type="match status" value="1"/>
</dbReference>
<protein>
    <recommendedName>
        <fullName evidence="1">Nucleoid-associated protein Rmet_2128</fullName>
    </recommendedName>
</protein>
<reference key="1">
    <citation type="journal article" date="2010" name="PLoS ONE">
        <title>The complete genome sequence of Cupriavidus metallidurans strain CH34, a master survivalist in harsh and anthropogenic environments.</title>
        <authorList>
            <person name="Janssen P.J."/>
            <person name="Van Houdt R."/>
            <person name="Moors H."/>
            <person name="Monsieurs P."/>
            <person name="Morin N."/>
            <person name="Michaux A."/>
            <person name="Benotmane M.A."/>
            <person name="Leys N."/>
            <person name="Vallaeys T."/>
            <person name="Lapidus A."/>
            <person name="Monchy S."/>
            <person name="Medigue C."/>
            <person name="Taghavi S."/>
            <person name="McCorkle S."/>
            <person name="Dunn J."/>
            <person name="van der Lelie D."/>
            <person name="Mergeay M."/>
        </authorList>
    </citation>
    <scope>NUCLEOTIDE SEQUENCE [LARGE SCALE GENOMIC DNA]</scope>
    <source>
        <strain>ATCC 43123 / DSM 2839 / NBRC 102507 / CH34</strain>
    </source>
</reference>
<organism>
    <name type="scientific">Cupriavidus metallidurans (strain ATCC 43123 / DSM 2839 / NBRC 102507 / CH34)</name>
    <name type="common">Ralstonia metallidurans</name>
    <dbReference type="NCBI Taxonomy" id="266264"/>
    <lineage>
        <taxon>Bacteria</taxon>
        <taxon>Pseudomonadati</taxon>
        <taxon>Pseudomonadota</taxon>
        <taxon>Betaproteobacteria</taxon>
        <taxon>Burkholderiales</taxon>
        <taxon>Burkholderiaceae</taxon>
        <taxon>Cupriavidus</taxon>
    </lineage>
</organism>